<comment type="catalytic activity">
    <reaction>
        <text>2 cob(II)yrinate a,c diamide + reduced [electron-transfer flavoprotein] + 2 ATP = 2 adenosylcob(III)yrinate a,c-diamide + 2 triphosphate + oxidized [electron-transfer flavoprotein] + 3 H(+)</text>
        <dbReference type="Rhea" id="RHEA:11528"/>
        <dbReference type="Rhea" id="RHEA-COMP:10685"/>
        <dbReference type="Rhea" id="RHEA-COMP:10686"/>
        <dbReference type="ChEBI" id="CHEBI:15378"/>
        <dbReference type="ChEBI" id="CHEBI:18036"/>
        <dbReference type="ChEBI" id="CHEBI:30616"/>
        <dbReference type="ChEBI" id="CHEBI:57692"/>
        <dbReference type="ChEBI" id="CHEBI:58307"/>
        <dbReference type="ChEBI" id="CHEBI:58503"/>
        <dbReference type="ChEBI" id="CHEBI:58537"/>
        <dbReference type="EC" id="2.5.1.17"/>
    </reaction>
</comment>
<comment type="catalytic activity">
    <reaction>
        <text>2 cob(II)alamin + reduced [electron-transfer flavoprotein] + 2 ATP = 2 adenosylcob(III)alamin + 2 triphosphate + oxidized [electron-transfer flavoprotein] + 3 H(+)</text>
        <dbReference type="Rhea" id="RHEA:28671"/>
        <dbReference type="Rhea" id="RHEA-COMP:10685"/>
        <dbReference type="Rhea" id="RHEA-COMP:10686"/>
        <dbReference type="ChEBI" id="CHEBI:15378"/>
        <dbReference type="ChEBI" id="CHEBI:16304"/>
        <dbReference type="ChEBI" id="CHEBI:18036"/>
        <dbReference type="ChEBI" id="CHEBI:18408"/>
        <dbReference type="ChEBI" id="CHEBI:30616"/>
        <dbReference type="ChEBI" id="CHEBI:57692"/>
        <dbReference type="ChEBI" id="CHEBI:58307"/>
        <dbReference type="EC" id="2.5.1.17"/>
    </reaction>
</comment>
<comment type="pathway">
    <text>Cofactor biosynthesis; adenosylcobalamin biosynthesis; adenosylcobalamin from cob(II)yrinate a,c-diamide: step 2/7.</text>
</comment>
<comment type="subcellular location">
    <subcellularLocation>
        <location evidence="2">Cytoplasm</location>
    </subcellularLocation>
</comment>
<comment type="similarity">
    <text evidence="2">Belongs to the Cob(I)alamin adenosyltransferase family.</text>
</comment>
<feature type="chain" id="PRO_0000426989" description="Corrinoid adenosyltransferase">
    <location>
        <begin position="1"/>
        <end position="193"/>
    </location>
</feature>
<feature type="binding site" evidence="1">
    <location>
        <begin position="10"/>
        <end position="18"/>
    </location>
    <ligand>
        <name>ATP</name>
        <dbReference type="ChEBI" id="CHEBI:30616"/>
    </ligand>
</feature>
<feature type="binding site" evidence="1">
    <location>
        <position position="28"/>
    </location>
    <ligand>
        <name>ATP</name>
        <dbReference type="ChEBI" id="CHEBI:30616"/>
    </ligand>
</feature>
<feature type="binding site" evidence="1">
    <location>
        <begin position="137"/>
        <end position="142"/>
    </location>
    <ligand>
        <name>ATP</name>
        <dbReference type="ChEBI" id="CHEBI:30616"/>
    </ligand>
</feature>
<feature type="binding site" evidence="1">
    <location>
        <position position="163"/>
    </location>
    <ligand>
        <name>ATP</name>
        <dbReference type="ChEBI" id="CHEBI:30616"/>
    </ligand>
</feature>
<sequence>MAVHLTRIYTRTGDDGTTGLSDMSRVAKTDARLVAYADCDEANAAIGAALALGHPDTQITDVLRQIQNDLFDAGADLSTPIVENPKHPPLRIAQSYIDRLEGWCDAYNAGLPALKSFVLPGGSPLSALLHVARTVVRRAERSAWAAVDAHPEGVSVLPAKYLNRLSDLLFILSRVANPDGDVLWRPGGDRTAS</sequence>
<proteinExistence type="inferred from homology"/>
<reference key="1">
    <citation type="journal article" date="2002" name="J. Bacteriol.">
        <title>Whole-genome comparison of Mycobacterium tuberculosis clinical and laboratory strains.</title>
        <authorList>
            <person name="Fleischmann R.D."/>
            <person name="Alland D."/>
            <person name="Eisen J.A."/>
            <person name="Carpenter L."/>
            <person name="White O."/>
            <person name="Peterson J.D."/>
            <person name="DeBoy R.T."/>
            <person name="Dodson R.J."/>
            <person name="Gwinn M.L."/>
            <person name="Haft D.H."/>
            <person name="Hickey E.K."/>
            <person name="Kolonay J.F."/>
            <person name="Nelson W.C."/>
            <person name="Umayam L.A."/>
            <person name="Ermolaeva M.D."/>
            <person name="Salzberg S.L."/>
            <person name="Delcher A."/>
            <person name="Utterback T.R."/>
            <person name="Weidman J.F."/>
            <person name="Khouri H.M."/>
            <person name="Gill J."/>
            <person name="Mikula A."/>
            <person name="Bishai W."/>
            <person name="Jacobs W.R. Jr."/>
            <person name="Venter J.C."/>
            <person name="Fraser C.M."/>
        </authorList>
    </citation>
    <scope>NUCLEOTIDE SEQUENCE [LARGE SCALE GENOMIC DNA]</scope>
    <source>
        <strain>CDC 1551 / Oshkosh</strain>
    </source>
</reference>
<accession>P9WP98</accession>
<accession>L0T6A0</accession>
<accession>P64803</accession>
<accession>Q10622</accession>
<name>PDUO_MYCTO</name>
<dbReference type="EC" id="2.5.1.17"/>
<dbReference type="EMBL" id="AE000516">
    <property type="protein sequence ID" value="AAK45616.1"/>
    <property type="molecule type" value="Genomic_DNA"/>
</dbReference>
<dbReference type="PIR" id="F70775">
    <property type="entry name" value="F70775"/>
</dbReference>
<dbReference type="RefSeq" id="WP_003406839.1">
    <property type="nucleotide sequence ID" value="NZ_KK341227.1"/>
</dbReference>
<dbReference type="SMR" id="P9WP98"/>
<dbReference type="KEGG" id="mtc:MT1354"/>
<dbReference type="PATRIC" id="fig|83331.31.peg.1460"/>
<dbReference type="HOGENOM" id="CLU_083486_0_0_11"/>
<dbReference type="UniPathway" id="UPA00148">
    <property type="reaction ID" value="UER00233"/>
</dbReference>
<dbReference type="Proteomes" id="UP000001020">
    <property type="component" value="Chromosome"/>
</dbReference>
<dbReference type="GO" id="GO:0005737">
    <property type="term" value="C:cytoplasm"/>
    <property type="evidence" value="ECO:0007669"/>
    <property type="project" value="UniProtKB-SubCell"/>
</dbReference>
<dbReference type="GO" id="GO:0005524">
    <property type="term" value="F:ATP binding"/>
    <property type="evidence" value="ECO:0007669"/>
    <property type="project" value="UniProtKB-KW"/>
</dbReference>
<dbReference type="GO" id="GO:0008817">
    <property type="term" value="F:corrinoid adenosyltransferase activity"/>
    <property type="evidence" value="ECO:0007669"/>
    <property type="project" value="UniProtKB-EC"/>
</dbReference>
<dbReference type="GO" id="GO:0009236">
    <property type="term" value="P:cobalamin biosynthetic process"/>
    <property type="evidence" value="ECO:0007669"/>
    <property type="project" value="UniProtKB-UniPathway"/>
</dbReference>
<dbReference type="GO" id="GO:0006779">
    <property type="term" value="P:porphyrin-containing compound biosynthetic process"/>
    <property type="evidence" value="ECO:0007669"/>
    <property type="project" value="UniProtKB-KW"/>
</dbReference>
<dbReference type="FunFam" id="1.20.1200.10:FF:000003">
    <property type="entry name" value="ATP:cob(I)alamin adenosyltransferase"/>
    <property type="match status" value="1"/>
</dbReference>
<dbReference type="Gene3D" id="1.20.1200.10">
    <property type="entry name" value="Cobalamin adenosyltransferase-like"/>
    <property type="match status" value="1"/>
</dbReference>
<dbReference type="InterPro" id="IPR016030">
    <property type="entry name" value="CblAdoTrfase-like"/>
</dbReference>
<dbReference type="InterPro" id="IPR036451">
    <property type="entry name" value="CblAdoTrfase-like_sf"/>
</dbReference>
<dbReference type="InterPro" id="IPR029499">
    <property type="entry name" value="PduO-typ"/>
</dbReference>
<dbReference type="NCBIfam" id="TIGR00636">
    <property type="entry name" value="PduO_Nterm"/>
    <property type="match status" value="1"/>
</dbReference>
<dbReference type="PANTHER" id="PTHR12213">
    <property type="entry name" value="CORRINOID ADENOSYLTRANSFERASE"/>
    <property type="match status" value="1"/>
</dbReference>
<dbReference type="PANTHER" id="PTHR12213:SF0">
    <property type="entry name" value="CORRINOID ADENOSYLTRANSFERASE MMAB"/>
    <property type="match status" value="1"/>
</dbReference>
<dbReference type="Pfam" id="PF01923">
    <property type="entry name" value="Cob_adeno_trans"/>
    <property type="match status" value="1"/>
</dbReference>
<dbReference type="SUPFAM" id="SSF89028">
    <property type="entry name" value="Cobalamin adenosyltransferase-like"/>
    <property type="match status" value="1"/>
</dbReference>
<organism>
    <name type="scientific">Mycobacterium tuberculosis (strain CDC 1551 / Oshkosh)</name>
    <dbReference type="NCBI Taxonomy" id="83331"/>
    <lineage>
        <taxon>Bacteria</taxon>
        <taxon>Bacillati</taxon>
        <taxon>Actinomycetota</taxon>
        <taxon>Actinomycetes</taxon>
        <taxon>Mycobacteriales</taxon>
        <taxon>Mycobacteriaceae</taxon>
        <taxon>Mycobacterium</taxon>
        <taxon>Mycobacterium tuberculosis complex</taxon>
    </lineage>
</organism>
<protein>
    <recommendedName>
        <fullName>Corrinoid adenosyltransferase</fullName>
        <ecNumber>2.5.1.17</ecNumber>
    </recommendedName>
    <alternativeName>
        <fullName>Cob(II)alamin adenosyltransferase</fullName>
    </alternativeName>
    <alternativeName>
        <fullName>Cob(II)yrinic acid a,c-diamide adenosyltransferase</fullName>
    </alternativeName>
    <alternativeName>
        <fullName>Cobinamide/cobalamin adenosyltransferase</fullName>
    </alternativeName>
</protein>
<keyword id="KW-0067">ATP-binding</keyword>
<keyword id="KW-0169">Cobalamin biosynthesis</keyword>
<keyword id="KW-0963">Cytoplasm</keyword>
<keyword id="KW-0547">Nucleotide-binding</keyword>
<keyword id="KW-0627">Porphyrin biosynthesis</keyword>
<keyword id="KW-1185">Reference proteome</keyword>
<keyword id="KW-0808">Transferase</keyword>
<evidence type="ECO:0000250" key="1"/>
<evidence type="ECO:0000305" key="2"/>
<gene>
    <name type="ordered locus">MT1354</name>
</gene>